<keyword id="KW-0687">Ribonucleoprotein</keyword>
<keyword id="KW-0689">Ribosomal protein</keyword>
<keyword id="KW-0694">RNA-binding</keyword>
<keyword id="KW-0699">rRNA-binding</keyword>
<evidence type="ECO:0000255" key="1">
    <source>
        <dbReference type="HAMAP-Rule" id="MF_01306"/>
    </source>
</evidence>
<evidence type="ECO:0000305" key="2"/>
<gene>
    <name evidence="1" type="primary">rpsD</name>
    <name type="ordered locus">SUN_2346</name>
</gene>
<sequence length="208" mass="24004">MARYRGPVERLERRLGVDLGLKGERRLAGKSALEKRPYAPGQHGQRRTKISEYGLQLQEKQKAKFMYGTSEKQFRALYKEANRKEGNTGSILIQLLEQRLDNVVYRMGFATTRASARQFVNHGHVLVDGKRVDIPSYRVKAGQKIEIREKSKTNSQILRAIELTNQTGMVEWVDVDKEKLFGIFSRVPEREEIAIPVEERLIVELYSK</sequence>
<dbReference type="EMBL" id="AP009179">
    <property type="protein sequence ID" value="BAF73282.1"/>
    <property type="molecule type" value="Genomic_DNA"/>
</dbReference>
<dbReference type="RefSeq" id="WP_012084121.1">
    <property type="nucleotide sequence ID" value="NC_009663.1"/>
</dbReference>
<dbReference type="SMR" id="A6QCS3"/>
<dbReference type="STRING" id="387093.SUN_2346"/>
<dbReference type="KEGG" id="sun:SUN_2346"/>
<dbReference type="eggNOG" id="COG0522">
    <property type="taxonomic scope" value="Bacteria"/>
</dbReference>
<dbReference type="HOGENOM" id="CLU_092403_0_2_7"/>
<dbReference type="OrthoDB" id="9803672at2"/>
<dbReference type="Proteomes" id="UP000006378">
    <property type="component" value="Chromosome"/>
</dbReference>
<dbReference type="GO" id="GO:0015935">
    <property type="term" value="C:small ribosomal subunit"/>
    <property type="evidence" value="ECO:0007669"/>
    <property type="project" value="InterPro"/>
</dbReference>
<dbReference type="GO" id="GO:0019843">
    <property type="term" value="F:rRNA binding"/>
    <property type="evidence" value="ECO:0007669"/>
    <property type="project" value="UniProtKB-UniRule"/>
</dbReference>
<dbReference type="GO" id="GO:0003735">
    <property type="term" value="F:structural constituent of ribosome"/>
    <property type="evidence" value="ECO:0007669"/>
    <property type="project" value="InterPro"/>
</dbReference>
<dbReference type="GO" id="GO:0042274">
    <property type="term" value="P:ribosomal small subunit biogenesis"/>
    <property type="evidence" value="ECO:0007669"/>
    <property type="project" value="TreeGrafter"/>
</dbReference>
<dbReference type="GO" id="GO:0006412">
    <property type="term" value="P:translation"/>
    <property type="evidence" value="ECO:0007669"/>
    <property type="project" value="UniProtKB-UniRule"/>
</dbReference>
<dbReference type="CDD" id="cd00165">
    <property type="entry name" value="S4"/>
    <property type="match status" value="1"/>
</dbReference>
<dbReference type="FunFam" id="1.10.1050.10:FF:000001">
    <property type="entry name" value="30S ribosomal protein S4"/>
    <property type="match status" value="1"/>
</dbReference>
<dbReference type="FunFam" id="3.10.290.10:FF:000001">
    <property type="entry name" value="30S ribosomal protein S4"/>
    <property type="match status" value="1"/>
</dbReference>
<dbReference type="Gene3D" id="1.10.1050.10">
    <property type="entry name" value="Ribosomal Protein S4 Delta 41, Chain A, domain 1"/>
    <property type="match status" value="1"/>
</dbReference>
<dbReference type="Gene3D" id="3.10.290.10">
    <property type="entry name" value="RNA-binding S4 domain"/>
    <property type="match status" value="1"/>
</dbReference>
<dbReference type="HAMAP" id="MF_01306_B">
    <property type="entry name" value="Ribosomal_uS4_B"/>
    <property type="match status" value="1"/>
</dbReference>
<dbReference type="InterPro" id="IPR022801">
    <property type="entry name" value="Ribosomal_uS4"/>
</dbReference>
<dbReference type="InterPro" id="IPR005709">
    <property type="entry name" value="Ribosomal_uS4_bac-type"/>
</dbReference>
<dbReference type="InterPro" id="IPR018079">
    <property type="entry name" value="Ribosomal_uS4_CS"/>
</dbReference>
<dbReference type="InterPro" id="IPR001912">
    <property type="entry name" value="Ribosomal_uS4_N"/>
</dbReference>
<dbReference type="InterPro" id="IPR002942">
    <property type="entry name" value="S4_RNA-bd"/>
</dbReference>
<dbReference type="InterPro" id="IPR036986">
    <property type="entry name" value="S4_RNA-bd_sf"/>
</dbReference>
<dbReference type="NCBIfam" id="NF003717">
    <property type="entry name" value="PRK05327.1"/>
    <property type="match status" value="1"/>
</dbReference>
<dbReference type="NCBIfam" id="TIGR01017">
    <property type="entry name" value="rpsD_bact"/>
    <property type="match status" value="1"/>
</dbReference>
<dbReference type="PANTHER" id="PTHR11831">
    <property type="entry name" value="30S 40S RIBOSOMAL PROTEIN"/>
    <property type="match status" value="1"/>
</dbReference>
<dbReference type="PANTHER" id="PTHR11831:SF4">
    <property type="entry name" value="SMALL RIBOSOMAL SUBUNIT PROTEIN US4M"/>
    <property type="match status" value="1"/>
</dbReference>
<dbReference type="Pfam" id="PF00163">
    <property type="entry name" value="Ribosomal_S4"/>
    <property type="match status" value="1"/>
</dbReference>
<dbReference type="Pfam" id="PF01479">
    <property type="entry name" value="S4"/>
    <property type="match status" value="1"/>
</dbReference>
<dbReference type="SMART" id="SM01390">
    <property type="entry name" value="Ribosomal_S4"/>
    <property type="match status" value="1"/>
</dbReference>
<dbReference type="SMART" id="SM00363">
    <property type="entry name" value="S4"/>
    <property type="match status" value="1"/>
</dbReference>
<dbReference type="SUPFAM" id="SSF55174">
    <property type="entry name" value="Alpha-L RNA-binding motif"/>
    <property type="match status" value="1"/>
</dbReference>
<dbReference type="PROSITE" id="PS00632">
    <property type="entry name" value="RIBOSOMAL_S4"/>
    <property type="match status" value="1"/>
</dbReference>
<dbReference type="PROSITE" id="PS50889">
    <property type="entry name" value="S4"/>
    <property type="match status" value="1"/>
</dbReference>
<accession>A6QCS3</accession>
<comment type="function">
    <text evidence="1">One of the primary rRNA binding proteins, it binds directly to 16S rRNA where it nucleates assembly of the body of the 30S subunit.</text>
</comment>
<comment type="function">
    <text evidence="1">With S5 and S12 plays an important role in translational accuracy.</text>
</comment>
<comment type="subunit">
    <text evidence="1">Part of the 30S ribosomal subunit. Contacts protein S5. The interaction surface between S4 and S5 is involved in control of translational fidelity.</text>
</comment>
<comment type="similarity">
    <text evidence="1">Belongs to the universal ribosomal protein uS4 family.</text>
</comment>
<organism>
    <name type="scientific">Sulfurovum sp. (strain NBC37-1)</name>
    <dbReference type="NCBI Taxonomy" id="387093"/>
    <lineage>
        <taxon>Bacteria</taxon>
        <taxon>Pseudomonadati</taxon>
        <taxon>Campylobacterota</taxon>
        <taxon>Epsilonproteobacteria</taxon>
        <taxon>Campylobacterales</taxon>
        <taxon>Sulfurovaceae</taxon>
        <taxon>Sulfurovum</taxon>
    </lineage>
</organism>
<proteinExistence type="inferred from homology"/>
<reference key="1">
    <citation type="journal article" date="2007" name="Proc. Natl. Acad. Sci. U.S.A.">
        <title>Deep-sea vent epsilon-proteobacterial genomes provide insights into emergence of pathogens.</title>
        <authorList>
            <person name="Nakagawa S."/>
            <person name="Takaki Y."/>
            <person name="Shimamura S."/>
            <person name="Reysenbach A.-L."/>
            <person name="Takai K."/>
            <person name="Horikoshi K."/>
        </authorList>
    </citation>
    <scope>NUCLEOTIDE SEQUENCE [LARGE SCALE GENOMIC DNA]</scope>
    <source>
        <strain>NBC37-1</strain>
    </source>
</reference>
<protein>
    <recommendedName>
        <fullName evidence="1">Small ribosomal subunit protein uS4</fullName>
    </recommendedName>
    <alternativeName>
        <fullName evidence="2">30S ribosomal protein S4</fullName>
    </alternativeName>
</protein>
<name>RS4_SULNB</name>
<feature type="chain" id="PRO_0000322343" description="Small ribosomal subunit protein uS4">
    <location>
        <begin position="1"/>
        <end position="208"/>
    </location>
</feature>
<feature type="domain" description="S4 RNA-binding" evidence="1">
    <location>
        <begin position="98"/>
        <end position="161"/>
    </location>
</feature>